<dbReference type="EMBL" id="CP000605">
    <property type="protein sequence ID" value="ACD99108.1"/>
    <property type="molecule type" value="Genomic_DNA"/>
</dbReference>
<dbReference type="RefSeq" id="WP_007052997.1">
    <property type="nucleotide sequence ID" value="NZ_AABM02000021.1"/>
</dbReference>
<dbReference type="SMR" id="B3DPW9"/>
<dbReference type="GeneID" id="69578936"/>
<dbReference type="KEGG" id="blj:BLD_1663"/>
<dbReference type="HOGENOM" id="CLU_148518_0_0_11"/>
<dbReference type="Proteomes" id="UP000002419">
    <property type="component" value="Chromosome"/>
</dbReference>
<dbReference type="GO" id="GO:0022627">
    <property type="term" value="C:cytosolic small ribosomal subunit"/>
    <property type="evidence" value="ECO:0007669"/>
    <property type="project" value="TreeGrafter"/>
</dbReference>
<dbReference type="GO" id="GO:0019843">
    <property type="term" value="F:rRNA binding"/>
    <property type="evidence" value="ECO:0007669"/>
    <property type="project" value="UniProtKB-UniRule"/>
</dbReference>
<dbReference type="GO" id="GO:0003735">
    <property type="term" value="F:structural constituent of ribosome"/>
    <property type="evidence" value="ECO:0007669"/>
    <property type="project" value="InterPro"/>
</dbReference>
<dbReference type="GO" id="GO:0006412">
    <property type="term" value="P:translation"/>
    <property type="evidence" value="ECO:0007669"/>
    <property type="project" value="UniProtKB-UniRule"/>
</dbReference>
<dbReference type="CDD" id="cd00353">
    <property type="entry name" value="Ribosomal_S15p_S13e"/>
    <property type="match status" value="1"/>
</dbReference>
<dbReference type="FunFam" id="1.10.287.10:FF:000002">
    <property type="entry name" value="30S ribosomal protein S15"/>
    <property type="match status" value="1"/>
</dbReference>
<dbReference type="Gene3D" id="6.10.250.3130">
    <property type="match status" value="1"/>
</dbReference>
<dbReference type="Gene3D" id="1.10.287.10">
    <property type="entry name" value="S15/NS1, RNA-binding"/>
    <property type="match status" value="1"/>
</dbReference>
<dbReference type="HAMAP" id="MF_01343_B">
    <property type="entry name" value="Ribosomal_uS15_B"/>
    <property type="match status" value="1"/>
</dbReference>
<dbReference type="InterPro" id="IPR000589">
    <property type="entry name" value="Ribosomal_uS15"/>
</dbReference>
<dbReference type="InterPro" id="IPR005290">
    <property type="entry name" value="Ribosomal_uS15_bac-type"/>
</dbReference>
<dbReference type="InterPro" id="IPR009068">
    <property type="entry name" value="uS15_NS1_RNA-bd_sf"/>
</dbReference>
<dbReference type="NCBIfam" id="TIGR00952">
    <property type="entry name" value="S15_bact"/>
    <property type="match status" value="1"/>
</dbReference>
<dbReference type="PANTHER" id="PTHR23321">
    <property type="entry name" value="RIBOSOMAL PROTEIN S15, BACTERIAL AND ORGANELLAR"/>
    <property type="match status" value="1"/>
</dbReference>
<dbReference type="PANTHER" id="PTHR23321:SF26">
    <property type="entry name" value="SMALL RIBOSOMAL SUBUNIT PROTEIN US15M"/>
    <property type="match status" value="1"/>
</dbReference>
<dbReference type="Pfam" id="PF00312">
    <property type="entry name" value="Ribosomal_S15"/>
    <property type="match status" value="1"/>
</dbReference>
<dbReference type="SMART" id="SM01387">
    <property type="entry name" value="Ribosomal_S15"/>
    <property type="match status" value="1"/>
</dbReference>
<dbReference type="SUPFAM" id="SSF47060">
    <property type="entry name" value="S15/NS1 RNA-binding domain"/>
    <property type="match status" value="1"/>
</dbReference>
<reference key="1">
    <citation type="journal article" date="2008" name="BMC Genomics">
        <title>Comparative genomic analysis of the gut bacterium Bifidobacterium longum reveals loci susceptible to deletion during pure culture growth.</title>
        <authorList>
            <person name="Lee J.H."/>
            <person name="Karamychev V.N."/>
            <person name="Kozyavkin S.A."/>
            <person name="Mills D."/>
            <person name="Pavlov A.R."/>
            <person name="Pavlova N.V."/>
            <person name="Polouchine N.N."/>
            <person name="Richardson P.M."/>
            <person name="Shakhova V.V."/>
            <person name="Slesarev A.I."/>
            <person name="Weimer B."/>
            <person name="O'Sullivan D.J."/>
        </authorList>
    </citation>
    <scope>NUCLEOTIDE SEQUENCE [LARGE SCALE GENOMIC DNA]</scope>
    <source>
        <strain>DJO10A</strain>
    </source>
</reference>
<accession>B3DPW9</accession>
<organism>
    <name type="scientific">Bifidobacterium longum (strain DJO10A)</name>
    <dbReference type="NCBI Taxonomy" id="205913"/>
    <lineage>
        <taxon>Bacteria</taxon>
        <taxon>Bacillati</taxon>
        <taxon>Actinomycetota</taxon>
        <taxon>Actinomycetes</taxon>
        <taxon>Bifidobacteriales</taxon>
        <taxon>Bifidobacteriaceae</taxon>
        <taxon>Bifidobacterium</taxon>
    </lineage>
</organism>
<gene>
    <name evidence="1" type="primary">rpsO</name>
    <name type="ordered locus">BLD_1663</name>
</gene>
<name>RS15_BIFLD</name>
<sequence length="89" mass="10485">MALTAEEKQEIIAKYATHEGDTGSPEVQVALLSKRIADLTEHLKEHKHDHHSRRGMQLMIGDRRRLLDYLKRVDINRYRSLIERLGLRR</sequence>
<protein>
    <recommendedName>
        <fullName evidence="1">Small ribosomal subunit protein uS15</fullName>
    </recommendedName>
    <alternativeName>
        <fullName evidence="2">30S ribosomal protein S15</fullName>
    </alternativeName>
</protein>
<comment type="function">
    <text evidence="1">One of the primary rRNA binding proteins, it binds directly to 16S rRNA where it helps nucleate assembly of the platform of the 30S subunit by binding and bridging several RNA helices of the 16S rRNA.</text>
</comment>
<comment type="function">
    <text evidence="1">Forms an intersubunit bridge (bridge B4) with the 23S rRNA of the 50S subunit in the ribosome.</text>
</comment>
<comment type="subunit">
    <text evidence="1">Part of the 30S ribosomal subunit. Forms a bridge to the 50S subunit in the 70S ribosome, contacting the 23S rRNA.</text>
</comment>
<comment type="similarity">
    <text evidence="1">Belongs to the universal ribosomal protein uS15 family.</text>
</comment>
<feature type="chain" id="PRO_1000143079" description="Small ribosomal subunit protein uS15">
    <location>
        <begin position="1"/>
        <end position="89"/>
    </location>
</feature>
<evidence type="ECO:0000255" key="1">
    <source>
        <dbReference type="HAMAP-Rule" id="MF_01343"/>
    </source>
</evidence>
<evidence type="ECO:0000305" key="2"/>
<proteinExistence type="inferred from homology"/>
<keyword id="KW-0687">Ribonucleoprotein</keyword>
<keyword id="KW-0689">Ribosomal protein</keyword>
<keyword id="KW-0694">RNA-binding</keyword>
<keyword id="KW-0699">rRNA-binding</keyword>